<feature type="chain" id="PRO_1000189666" description="ATP-dependent Clp protease proteolytic subunit">
    <location>
        <begin position="1"/>
        <end position="207"/>
    </location>
</feature>
<feature type="active site" description="Nucleophile" evidence="1">
    <location>
        <position position="111"/>
    </location>
</feature>
<feature type="active site" evidence="1">
    <location>
        <position position="136"/>
    </location>
</feature>
<reference key="1">
    <citation type="journal article" date="2011" name="J. Bacteriol.">
        <title>Comparative genomics of 28 Salmonella enterica isolates: evidence for CRISPR-mediated adaptive sublineage evolution.</title>
        <authorList>
            <person name="Fricke W.F."/>
            <person name="Mammel M.K."/>
            <person name="McDermott P.F."/>
            <person name="Tartera C."/>
            <person name="White D.G."/>
            <person name="Leclerc J.E."/>
            <person name="Ravel J."/>
            <person name="Cebula T.A."/>
        </authorList>
    </citation>
    <scope>NUCLEOTIDE SEQUENCE [LARGE SCALE GENOMIC DNA]</scope>
    <source>
        <strain>CVM19633</strain>
    </source>
</reference>
<comment type="function">
    <text evidence="1">Cleaves peptides in various proteins in a process that requires ATP hydrolysis. Has a chymotrypsin-like activity. Plays a major role in the degradation of misfolded proteins.</text>
</comment>
<comment type="catalytic activity">
    <reaction evidence="1">
        <text>Hydrolysis of proteins to small peptides in the presence of ATP and magnesium. alpha-casein is the usual test substrate. In the absence of ATP, only oligopeptides shorter than five residues are hydrolyzed (such as succinyl-Leu-Tyr-|-NHMec, and Leu-Tyr-Leu-|-Tyr-Trp, in which cleavage of the -Tyr-|-Leu- and -Tyr-|-Trp bonds also occurs).</text>
        <dbReference type="EC" id="3.4.21.92"/>
    </reaction>
</comment>
<comment type="subunit">
    <text evidence="1">Fourteen ClpP subunits assemble into 2 heptameric rings which stack back to back to give a disk-like structure with a central cavity, resembling the structure of eukaryotic proteasomes. Component of the ClpAP and ClpXP complexes.</text>
</comment>
<comment type="subcellular location">
    <subcellularLocation>
        <location evidence="1">Cytoplasm</location>
    </subcellularLocation>
</comment>
<comment type="similarity">
    <text evidence="1">Belongs to the peptidase S14 family.</text>
</comment>
<sequence>MSYSGERDNLAPHMALVPMVIEQTSRGERSFDIYSRLLKERVIFLTGQVEDHMANLIVAQMLFLEAENPEKDIYLYINSPGGVITAGMSIYDTMQFIKPDVSTICMGQAASMGAFLLTAGAKGKRFCLPNSRVMIHQPLGGYQGQATDIEIHAREILKVKGRMNELMAHHTGQSLEQIERDTERDRFLSAPEAVEYGLVDSILTHRN</sequence>
<organism>
    <name type="scientific">Salmonella schwarzengrund (strain CVM19633)</name>
    <dbReference type="NCBI Taxonomy" id="439843"/>
    <lineage>
        <taxon>Bacteria</taxon>
        <taxon>Pseudomonadati</taxon>
        <taxon>Pseudomonadota</taxon>
        <taxon>Gammaproteobacteria</taxon>
        <taxon>Enterobacterales</taxon>
        <taxon>Enterobacteriaceae</taxon>
        <taxon>Salmonella</taxon>
    </lineage>
</organism>
<gene>
    <name evidence="1" type="primary">clpP</name>
    <name type="ordered locus">SeSA_A0507</name>
</gene>
<evidence type="ECO:0000255" key="1">
    <source>
        <dbReference type="HAMAP-Rule" id="MF_00444"/>
    </source>
</evidence>
<protein>
    <recommendedName>
        <fullName evidence="1">ATP-dependent Clp protease proteolytic subunit</fullName>
        <ecNumber evidence="1">3.4.21.92</ecNumber>
    </recommendedName>
    <alternativeName>
        <fullName evidence="1">Endopeptidase Clp</fullName>
    </alternativeName>
</protein>
<accession>B4TMC6</accession>
<name>CLPP_SALSV</name>
<keyword id="KW-0963">Cytoplasm</keyword>
<keyword id="KW-0378">Hydrolase</keyword>
<keyword id="KW-0645">Protease</keyword>
<keyword id="KW-0720">Serine protease</keyword>
<proteinExistence type="inferred from homology"/>
<dbReference type="EC" id="3.4.21.92" evidence="1"/>
<dbReference type="EMBL" id="CP001127">
    <property type="protein sequence ID" value="ACF89178.1"/>
    <property type="molecule type" value="Genomic_DNA"/>
</dbReference>
<dbReference type="RefSeq" id="WP_000122257.1">
    <property type="nucleotide sequence ID" value="NC_011094.1"/>
</dbReference>
<dbReference type="SMR" id="B4TMC6"/>
<dbReference type="MEROPS" id="S14.001"/>
<dbReference type="GeneID" id="66754911"/>
<dbReference type="KEGG" id="sew:SeSA_A0507"/>
<dbReference type="HOGENOM" id="CLU_058707_3_2_6"/>
<dbReference type="Proteomes" id="UP000001865">
    <property type="component" value="Chromosome"/>
</dbReference>
<dbReference type="GO" id="GO:0005737">
    <property type="term" value="C:cytoplasm"/>
    <property type="evidence" value="ECO:0007669"/>
    <property type="project" value="UniProtKB-SubCell"/>
</dbReference>
<dbReference type="GO" id="GO:0009368">
    <property type="term" value="C:endopeptidase Clp complex"/>
    <property type="evidence" value="ECO:0007669"/>
    <property type="project" value="TreeGrafter"/>
</dbReference>
<dbReference type="GO" id="GO:0004176">
    <property type="term" value="F:ATP-dependent peptidase activity"/>
    <property type="evidence" value="ECO:0007669"/>
    <property type="project" value="InterPro"/>
</dbReference>
<dbReference type="GO" id="GO:0051117">
    <property type="term" value="F:ATPase binding"/>
    <property type="evidence" value="ECO:0007669"/>
    <property type="project" value="TreeGrafter"/>
</dbReference>
<dbReference type="GO" id="GO:0004252">
    <property type="term" value="F:serine-type endopeptidase activity"/>
    <property type="evidence" value="ECO:0007669"/>
    <property type="project" value="UniProtKB-UniRule"/>
</dbReference>
<dbReference type="GO" id="GO:0006515">
    <property type="term" value="P:protein quality control for misfolded or incompletely synthesized proteins"/>
    <property type="evidence" value="ECO:0007669"/>
    <property type="project" value="TreeGrafter"/>
</dbReference>
<dbReference type="CDD" id="cd07017">
    <property type="entry name" value="S14_ClpP_2"/>
    <property type="match status" value="1"/>
</dbReference>
<dbReference type="FunFam" id="3.90.226.10:FF:000001">
    <property type="entry name" value="ATP-dependent Clp protease proteolytic subunit"/>
    <property type="match status" value="1"/>
</dbReference>
<dbReference type="Gene3D" id="3.90.226.10">
    <property type="entry name" value="2-enoyl-CoA Hydratase, Chain A, domain 1"/>
    <property type="match status" value="1"/>
</dbReference>
<dbReference type="HAMAP" id="MF_00444">
    <property type="entry name" value="ClpP"/>
    <property type="match status" value="1"/>
</dbReference>
<dbReference type="InterPro" id="IPR001907">
    <property type="entry name" value="ClpP"/>
</dbReference>
<dbReference type="InterPro" id="IPR029045">
    <property type="entry name" value="ClpP/crotonase-like_dom_sf"/>
</dbReference>
<dbReference type="InterPro" id="IPR023562">
    <property type="entry name" value="ClpP/TepA"/>
</dbReference>
<dbReference type="InterPro" id="IPR033135">
    <property type="entry name" value="ClpP_His_AS"/>
</dbReference>
<dbReference type="InterPro" id="IPR018215">
    <property type="entry name" value="ClpP_Ser_AS"/>
</dbReference>
<dbReference type="NCBIfam" id="TIGR00493">
    <property type="entry name" value="clpP"/>
    <property type="match status" value="1"/>
</dbReference>
<dbReference type="NCBIfam" id="NF001368">
    <property type="entry name" value="PRK00277.1"/>
    <property type="match status" value="1"/>
</dbReference>
<dbReference type="NCBIfam" id="NF009205">
    <property type="entry name" value="PRK12553.1"/>
    <property type="match status" value="1"/>
</dbReference>
<dbReference type="PANTHER" id="PTHR10381">
    <property type="entry name" value="ATP-DEPENDENT CLP PROTEASE PROTEOLYTIC SUBUNIT"/>
    <property type="match status" value="1"/>
</dbReference>
<dbReference type="PANTHER" id="PTHR10381:SF70">
    <property type="entry name" value="ATP-DEPENDENT CLP PROTEASE PROTEOLYTIC SUBUNIT"/>
    <property type="match status" value="1"/>
</dbReference>
<dbReference type="Pfam" id="PF00574">
    <property type="entry name" value="CLP_protease"/>
    <property type="match status" value="1"/>
</dbReference>
<dbReference type="PRINTS" id="PR00127">
    <property type="entry name" value="CLPPROTEASEP"/>
</dbReference>
<dbReference type="SUPFAM" id="SSF52096">
    <property type="entry name" value="ClpP/crotonase"/>
    <property type="match status" value="1"/>
</dbReference>
<dbReference type="PROSITE" id="PS00382">
    <property type="entry name" value="CLP_PROTEASE_HIS"/>
    <property type="match status" value="1"/>
</dbReference>
<dbReference type="PROSITE" id="PS00381">
    <property type="entry name" value="CLP_PROTEASE_SER"/>
    <property type="match status" value="1"/>
</dbReference>